<organism>
    <name type="scientific">Thermodesulfovibrio yellowstonii (strain ATCC 51303 / DSM 11347 / YP87)</name>
    <dbReference type="NCBI Taxonomy" id="289376"/>
    <lineage>
        <taxon>Bacteria</taxon>
        <taxon>Pseudomonadati</taxon>
        <taxon>Nitrospirota</taxon>
        <taxon>Thermodesulfovibrionia</taxon>
        <taxon>Thermodesulfovibrionales</taxon>
        <taxon>Thermodesulfovibrionaceae</taxon>
        <taxon>Thermodesulfovibrio</taxon>
    </lineage>
</organism>
<evidence type="ECO:0000255" key="1">
    <source>
        <dbReference type="HAMAP-Rule" id="MF_00079"/>
    </source>
</evidence>
<accession>B5YJ68</accession>
<comment type="function">
    <text evidence="1">Catalyzes the condensation of ATP and 5-phosphoribose 1-diphosphate to form N'-(5'-phosphoribosyl)-ATP (PR-ATP). Has a crucial role in the pathway because the rate of histidine biosynthesis seems to be controlled primarily by regulation of HisG enzymatic activity.</text>
</comment>
<comment type="catalytic activity">
    <reaction evidence="1">
        <text>1-(5-phospho-beta-D-ribosyl)-ATP + diphosphate = 5-phospho-alpha-D-ribose 1-diphosphate + ATP</text>
        <dbReference type="Rhea" id="RHEA:18473"/>
        <dbReference type="ChEBI" id="CHEBI:30616"/>
        <dbReference type="ChEBI" id="CHEBI:33019"/>
        <dbReference type="ChEBI" id="CHEBI:58017"/>
        <dbReference type="ChEBI" id="CHEBI:73183"/>
        <dbReference type="EC" id="2.4.2.17"/>
    </reaction>
</comment>
<comment type="cofactor">
    <cofactor evidence="1">
        <name>Mg(2+)</name>
        <dbReference type="ChEBI" id="CHEBI:18420"/>
    </cofactor>
</comment>
<comment type="activity regulation">
    <text evidence="1">Feedback inhibited by histidine.</text>
</comment>
<comment type="pathway">
    <text evidence="1">Amino-acid biosynthesis; L-histidine biosynthesis; L-histidine from 5-phospho-alpha-D-ribose 1-diphosphate: step 1/9.</text>
</comment>
<comment type="subcellular location">
    <subcellularLocation>
        <location evidence="1">Cytoplasm</location>
    </subcellularLocation>
</comment>
<comment type="similarity">
    <text evidence="1">Belongs to the ATP phosphoribosyltransferase family. Long subfamily.</text>
</comment>
<feature type="chain" id="PRO_1000092757" description="ATP phosphoribosyltransferase">
    <location>
        <begin position="1"/>
        <end position="292"/>
    </location>
</feature>
<name>HIS1_THEYD</name>
<keyword id="KW-0028">Amino-acid biosynthesis</keyword>
<keyword id="KW-0067">ATP-binding</keyword>
<keyword id="KW-0963">Cytoplasm</keyword>
<keyword id="KW-0328">Glycosyltransferase</keyword>
<keyword id="KW-0368">Histidine biosynthesis</keyword>
<keyword id="KW-0460">Magnesium</keyword>
<keyword id="KW-0479">Metal-binding</keyword>
<keyword id="KW-0547">Nucleotide-binding</keyword>
<keyword id="KW-1185">Reference proteome</keyword>
<keyword id="KW-0808">Transferase</keyword>
<reference key="1">
    <citation type="submission" date="2008-08" db="EMBL/GenBank/DDBJ databases">
        <title>The complete genome sequence of Thermodesulfovibrio yellowstonii strain ATCC 51303 / DSM 11347 / YP87.</title>
        <authorList>
            <person name="Dodson R.J."/>
            <person name="Durkin A.S."/>
            <person name="Wu M."/>
            <person name="Eisen J."/>
            <person name="Sutton G."/>
        </authorList>
    </citation>
    <scope>NUCLEOTIDE SEQUENCE [LARGE SCALE GENOMIC DNA]</scope>
    <source>
        <strain>ATCC 51303 / DSM 11347 / YP87</strain>
    </source>
</reference>
<sequence length="292" mass="33108">MKDKVLKLGLPKGSLQETTLKLFKKAGYNIHVSHRSYYPVIDDEEISGMLLRAQEVPVYVEKGYLDCGLTGYDWILEQNVDVIEVAELRYAKEGFRPVKWVIAVPEDSPIKTVEDLQGKRIATELVGYTKRYLKSKGIKAEVYFSWGATEVKPPYLADAIVDLTETGTSLKANKLRVIETILESTTRFITNKNAWKNSWKKKKMQDIAMLLQGALLAEEKVGLKMNVPKDSLKKVLCLLNSLHSPTISQLYDEEWYAVEVIINEKKVRELLPKLKDAGASGFVEYPLNKVIP</sequence>
<gene>
    <name evidence="1" type="primary">hisG</name>
    <name type="ordered locus">THEYE_A0436</name>
</gene>
<proteinExistence type="inferred from homology"/>
<protein>
    <recommendedName>
        <fullName evidence="1">ATP phosphoribosyltransferase</fullName>
        <shortName evidence="1">ATP-PRT</shortName>
        <shortName evidence="1">ATP-PRTase</shortName>
        <ecNumber evidence="1">2.4.2.17</ecNumber>
    </recommendedName>
</protein>
<dbReference type="EC" id="2.4.2.17" evidence="1"/>
<dbReference type="EMBL" id="CP001147">
    <property type="protein sequence ID" value="ACI20977.1"/>
    <property type="molecule type" value="Genomic_DNA"/>
</dbReference>
<dbReference type="RefSeq" id="WP_012545705.1">
    <property type="nucleotide sequence ID" value="NC_011296.1"/>
</dbReference>
<dbReference type="RefSeq" id="YP_002248283.1">
    <property type="nucleotide sequence ID" value="NC_011296.1"/>
</dbReference>
<dbReference type="SMR" id="B5YJ68"/>
<dbReference type="FunCoup" id="B5YJ68">
    <property type="interactions" value="380"/>
</dbReference>
<dbReference type="STRING" id="289376.THEYE_A0436"/>
<dbReference type="EnsemblBacteria" id="ACI20977">
    <property type="protein sequence ID" value="ACI20977"/>
    <property type="gene ID" value="THEYE_A0436"/>
</dbReference>
<dbReference type="KEGG" id="tye:THEYE_A0436"/>
<dbReference type="PATRIC" id="fig|289376.4.peg.433"/>
<dbReference type="eggNOG" id="COG0040">
    <property type="taxonomic scope" value="Bacteria"/>
</dbReference>
<dbReference type="HOGENOM" id="CLU_038115_1_1_0"/>
<dbReference type="InParanoid" id="B5YJ68"/>
<dbReference type="OrthoDB" id="9801867at2"/>
<dbReference type="UniPathway" id="UPA00031">
    <property type="reaction ID" value="UER00006"/>
</dbReference>
<dbReference type="Proteomes" id="UP000000718">
    <property type="component" value="Chromosome"/>
</dbReference>
<dbReference type="GO" id="GO:0005737">
    <property type="term" value="C:cytoplasm"/>
    <property type="evidence" value="ECO:0007669"/>
    <property type="project" value="UniProtKB-SubCell"/>
</dbReference>
<dbReference type="GO" id="GO:0005524">
    <property type="term" value="F:ATP binding"/>
    <property type="evidence" value="ECO:0007669"/>
    <property type="project" value="UniProtKB-KW"/>
</dbReference>
<dbReference type="GO" id="GO:0003879">
    <property type="term" value="F:ATP phosphoribosyltransferase activity"/>
    <property type="evidence" value="ECO:0000318"/>
    <property type="project" value="GO_Central"/>
</dbReference>
<dbReference type="GO" id="GO:0000287">
    <property type="term" value="F:magnesium ion binding"/>
    <property type="evidence" value="ECO:0007669"/>
    <property type="project" value="UniProtKB-UniRule"/>
</dbReference>
<dbReference type="GO" id="GO:0000105">
    <property type="term" value="P:L-histidine biosynthetic process"/>
    <property type="evidence" value="ECO:0000318"/>
    <property type="project" value="GO_Central"/>
</dbReference>
<dbReference type="CDD" id="cd13593">
    <property type="entry name" value="PBP2_HisGL3"/>
    <property type="match status" value="1"/>
</dbReference>
<dbReference type="FunFam" id="3.30.70.120:FF:000002">
    <property type="entry name" value="ATP phosphoribosyltransferase"/>
    <property type="match status" value="1"/>
</dbReference>
<dbReference type="FunFam" id="3.40.190.10:FF:000258">
    <property type="entry name" value="ATP phosphoribosyltransferase"/>
    <property type="match status" value="1"/>
</dbReference>
<dbReference type="Gene3D" id="3.30.70.120">
    <property type="match status" value="1"/>
</dbReference>
<dbReference type="Gene3D" id="3.40.190.10">
    <property type="entry name" value="Periplasmic binding protein-like II"/>
    <property type="match status" value="2"/>
</dbReference>
<dbReference type="HAMAP" id="MF_00079">
    <property type="entry name" value="HisG_Long"/>
    <property type="match status" value="1"/>
</dbReference>
<dbReference type="InterPro" id="IPR020621">
    <property type="entry name" value="ATP-PRT_HisG_long"/>
</dbReference>
<dbReference type="InterPro" id="IPR013820">
    <property type="entry name" value="ATP_PRibTrfase_cat"/>
</dbReference>
<dbReference type="InterPro" id="IPR001348">
    <property type="entry name" value="ATP_PRibTrfase_HisG"/>
</dbReference>
<dbReference type="InterPro" id="IPR013115">
    <property type="entry name" value="HisG_C"/>
</dbReference>
<dbReference type="InterPro" id="IPR011322">
    <property type="entry name" value="N-reg_PII-like_a/b"/>
</dbReference>
<dbReference type="InterPro" id="IPR015867">
    <property type="entry name" value="N-reg_PII/ATP_PRibTrfase_C"/>
</dbReference>
<dbReference type="NCBIfam" id="TIGR00070">
    <property type="entry name" value="hisG"/>
    <property type="match status" value="1"/>
</dbReference>
<dbReference type="NCBIfam" id="TIGR03455">
    <property type="entry name" value="HisG_C-term"/>
    <property type="match status" value="1"/>
</dbReference>
<dbReference type="PANTHER" id="PTHR21403:SF10">
    <property type="entry name" value="ATP PHOSPHORIBOSYLTRANSFERASE"/>
    <property type="match status" value="1"/>
</dbReference>
<dbReference type="PANTHER" id="PTHR21403">
    <property type="entry name" value="ATP PHOSPHORIBOSYLTRANSFERASE ATP-PRTASE"/>
    <property type="match status" value="1"/>
</dbReference>
<dbReference type="Pfam" id="PF01634">
    <property type="entry name" value="HisG"/>
    <property type="match status" value="1"/>
</dbReference>
<dbReference type="Pfam" id="PF08029">
    <property type="entry name" value="HisG_C"/>
    <property type="match status" value="1"/>
</dbReference>
<dbReference type="SUPFAM" id="SSF54913">
    <property type="entry name" value="GlnB-like"/>
    <property type="match status" value="1"/>
</dbReference>
<dbReference type="SUPFAM" id="SSF53850">
    <property type="entry name" value="Periplasmic binding protein-like II"/>
    <property type="match status" value="1"/>
</dbReference>